<keyword id="KW-1185">Reference proteome</keyword>
<proteinExistence type="inferred from homology"/>
<comment type="similarity">
    <text evidence="1">Belongs to the free Met sulfoxide reductase family.</text>
</comment>
<accession>O66116</accession>
<accession>Q5NQ74</accession>
<name>Y507_ZYMMO</name>
<gene>
    <name type="ordered locus">ZMO0507</name>
</gene>
<sequence>MFSFSINTGSKKTLYSDLLTTLKELLSEEGDPIANMANTAALIWTYMPDLNWVGFYRAIRSYLILGPFQGKVACVKIPYGRGVCGTAAATGRIQCVRDVHTYPNHISCDPSAASELVIPIRGRQNQILAVIDLESPTMGRFDAEDVEGCSRLMEVLGRFLG</sequence>
<protein>
    <recommendedName>
        <fullName>Protein ZMO0507</fullName>
    </recommendedName>
</protein>
<feature type="chain" id="PRO_0000171555" description="Protein ZMO0507">
    <location>
        <begin position="1"/>
        <end position="161"/>
    </location>
</feature>
<organism>
    <name type="scientific">Zymomonas mobilis subsp. mobilis (strain ATCC 31821 / ZM4 / CP4)</name>
    <dbReference type="NCBI Taxonomy" id="264203"/>
    <lineage>
        <taxon>Bacteria</taxon>
        <taxon>Pseudomonadati</taxon>
        <taxon>Pseudomonadota</taxon>
        <taxon>Alphaproteobacteria</taxon>
        <taxon>Sphingomonadales</taxon>
        <taxon>Zymomonadaceae</taxon>
        <taxon>Zymomonas</taxon>
    </lineage>
</organism>
<dbReference type="EMBL" id="X93605">
    <property type="protein sequence ID" value="CAA63805.1"/>
    <property type="molecule type" value="Genomic_DNA"/>
</dbReference>
<dbReference type="EMBL" id="AE008692">
    <property type="protein sequence ID" value="AAV89131.1"/>
    <property type="molecule type" value="Genomic_DNA"/>
</dbReference>
<dbReference type="RefSeq" id="WP_011240411.1">
    <property type="nucleotide sequence ID" value="NZ_CP035711.1"/>
</dbReference>
<dbReference type="SMR" id="O66116"/>
<dbReference type="STRING" id="264203.ZMO0507"/>
<dbReference type="KEGG" id="zmo:ZMO0507"/>
<dbReference type="eggNOG" id="COG1956">
    <property type="taxonomic scope" value="Bacteria"/>
</dbReference>
<dbReference type="HOGENOM" id="CLU_077738_2_0_5"/>
<dbReference type="Proteomes" id="UP000001173">
    <property type="component" value="Chromosome"/>
</dbReference>
<dbReference type="GO" id="GO:0005829">
    <property type="term" value="C:cytosol"/>
    <property type="evidence" value="ECO:0007669"/>
    <property type="project" value="TreeGrafter"/>
</dbReference>
<dbReference type="GO" id="GO:0033745">
    <property type="term" value="F:L-methionine-(R)-S-oxide reductase activity"/>
    <property type="evidence" value="ECO:0007669"/>
    <property type="project" value="TreeGrafter"/>
</dbReference>
<dbReference type="FunFam" id="3.30.450.40:FF:000008">
    <property type="entry name" value="GAF domain-containing proteins"/>
    <property type="match status" value="1"/>
</dbReference>
<dbReference type="Gene3D" id="3.30.450.40">
    <property type="match status" value="1"/>
</dbReference>
<dbReference type="InterPro" id="IPR000614">
    <property type="entry name" value="FRMsr_CS"/>
</dbReference>
<dbReference type="InterPro" id="IPR003018">
    <property type="entry name" value="GAF"/>
</dbReference>
<dbReference type="InterPro" id="IPR029016">
    <property type="entry name" value="GAF-like_dom_sf"/>
</dbReference>
<dbReference type="InterPro" id="IPR051330">
    <property type="entry name" value="Phosphatase_reg/MetRdx"/>
</dbReference>
<dbReference type="PANTHER" id="PTHR21021:SF15">
    <property type="entry name" value="FREE METHIONINE-R-SULFOXIDE REDUCTASE"/>
    <property type="match status" value="1"/>
</dbReference>
<dbReference type="PANTHER" id="PTHR21021">
    <property type="entry name" value="GAF/PUTATIVE CYTOSKELETAL PROTEIN"/>
    <property type="match status" value="1"/>
</dbReference>
<dbReference type="Pfam" id="PF13185">
    <property type="entry name" value="GAF_2"/>
    <property type="match status" value="1"/>
</dbReference>
<dbReference type="SUPFAM" id="SSF55781">
    <property type="entry name" value="GAF domain-like"/>
    <property type="match status" value="1"/>
</dbReference>
<dbReference type="PROSITE" id="PS01320">
    <property type="entry name" value="UPF0067"/>
    <property type="match status" value="1"/>
</dbReference>
<reference key="1">
    <citation type="journal article" date="1998" name="J. Bacteriol.">
        <title>Purification of the pyruvate dehydrogenase multienzyme complex of Zymomonas mobilis and identification and sequence analysis of the corresponding genes.</title>
        <authorList>
            <person name="Neveling U."/>
            <person name="Klasen R."/>
            <person name="Bringer-Meyer S."/>
            <person name="Sahm H."/>
        </authorList>
    </citation>
    <scope>NUCLEOTIDE SEQUENCE [GENOMIC DNA]</scope>
    <source>
        <strain>ATCC 29191 / DSM 3580 / JCM 10190 / CECT 560 / NBRC 13756 / NCIMB 11199 / NRRL B-4490 / ZM6</strain>
    </source>
</reference>
<reference key="2">
    <citation type="journal article" date="2005" name="Nat. Biotechnol.">
        <title>The genome sequence of the ethanologenic bacterium Zymomonas mobilis ZM4.</title>
        <authorList>
            <person name="Seo J.-S."/>
            <person name="Chong H."/>
            <person name="Park H.S."/>
            <person name="Yoon K.-O."/>
            <person name="Jung C."/>
            <person name="Kim J.J."/>
            <person name="Hong J.H."/>
            <person name="Kim H."/>
            <person name="Kim J.-H."/>
            <person name="Kil J.-I."/>
            <person name="Park C.J."/>
            <person name="Oh H.-M."/>
            <person name="Lee J.-S."/>
            <person name="Jin S.-J."/>
            <person name="Um H.-W."/>
            <person name="Lee H.-J."/>
            <person name="Oh S.-J."/>
            <person name="Kim J.Y."/>
            <person name="Kang H.L."/>
            <person name="Lee S.Y."/>
            <person name="Lee K.J."/>
            <person name="Kang H.S."/>
        </authorList>
    </citation>
    <scope>NUCLEOTIDE SEQUENCE [LARGE SCALE GENOMIC DNA]</scope>
    <source>
        <strain>ATCC 31821 / ZM4 / CP4</strain>
    </source>
</reference>
<evidence type="ECO:0000305" key="1"/>